<organism>
    <name type="scientific">Streptococcus uberis (strain ATCC BAA-854 / 0140J)</name>
    <dbReference type="NCBI Taxonomy" id="218495"/>
    <lineage>
        <taxon>Bacteria</taxon>
        <taxon>Bacillati</taxon>
        <taxon>Bacillota</taxon>
        <taxon>Bacilli</taxon>
        <taxon>Lactobacillales</taxon>
        <taxon>Streptococcaceae</taxon>
        <taxon>Streptococcus</taxon>
    </lineage>
</organism>
<comment type="catalytic activity">
    <reaction evidence="1">
        <text>(2R)-3-phosphoglycerate + ATP = (2R)-3-phospho-glyceroyl phosphate + ADP</text>
        <dbReference type="Rhea" id="RHEA:14801"/>
        <dbReference type="ChEBI" id="CHEBI:30616"/>
        <dbReference type="ChEBI" id="CHEBI:57604"/>
        <dbReference type="ChEBI" id="CHEBI:58272"/>
        <dbReference type="ChEBI" id="CHEBI:456216"/>
        <dbReference type="EC" id="2.7.2.3"/>
    </reaction>
</comment>
<comment type="pathway">
    <text evidence="1">Carbohydrate degradation; glycolysis; pyruvate from D-glyceraldehyde 3-phosphate: step 2/5.</text>
</comment>
<comment type="subunit">
    <text evidence="1">Monomer.</text>
</comment>
<comment type="subcellular location">
    <subcellularLocation>
        <location evidence="1">Cytoplasm</location>
    </subcellularLocation>
</comment>
<comment type="similarity">
    <text evidence="1">Belongs to the phosphoglycerate kinase family.</text>
</comment>
<accession>B9DVS0</accession>
<dbReference type="EC" id="2.7.2.3" evidence="1"/>
<dbReference type="EMBL" id="AM946015">
    <property type="protein sequence ID" value="CAR43480.1"/>
    <property type="molecule type" value="Genomic_DNA"/>
</dbReference>
<dbReference type="RefSeq" id="WP_015911928.1">
    <property type="nucleotide sequence ID" value="NC_012004.1"/>
</dbReference>
<dbReference type="SMR" id="B9DVS0"/>
<dbReference type="STRING" id="218495.SUB1629"/>
<dbReference type="KEGG" id="sub:SUB1629"/>
<dbReference type="eggNOG" id="COG0126">
    <property type="taxonomic scope" value="Bacteria"/>
</dbReference>
<dbReference type="HOGENOM" id="CLU_025427_0_1_9"/>
<dbReference type="OrthoDB" id="9808460at2"/>
<dbReference type="UniPathway" id="UPA00109">
    <property type="reaction ID" value="UER00185"/>
</dbReference>
<dbReference type="Proteomes" id="UP000000449">
    <property type="component" value="Chromosome"/>
</dbReference>
<dbReference type="GO" id="GO:0005829">
    <property type="term" value="C:cytosol"/>
    <property type="evidence" value="ECO:0007669"/>
    <property type="project" value="TreeGrafter"/>
</dbReference>
<dbReference type="GO" id="GO:0043531">
    <property type="term" value="F:ADP binding"/>
    <property type="evidence" value="ECO:0007669"/>
    <property type="project" value="TreeGrafter"/>
</dbReference>
<dbReference type="GO" id="GO:0005524">
    <property type="term" value="F:ATP binding"/>
    <property type="evidence" value="ECO:0007669"/>
    <property type="project" value="UniProtKB-KW"/>
</dbReference>
<dbReference type="GO" id="GO:0004618">
    <property type="term" value="F:phosphoglycerate kinase activity"/>
    <property type="evidence" value="ECO:0007669"/>
    <property type="project" value="UniProtKB-UniRule"/>
</dbReference>
<dbReference type="GO" id="GO:0006094">
    <property type="term" value="P:gluconeogenesis"/>
    <property type="evidence" value="ECO:0007669"/>
    <property type="project" value="TreeGrafter"/>
</dbReference>
<dbReference type="GO" id="GO:0006096">
    <property type="term" value="P:glycolytic process"/>
    <property type="evidence" value="ECO:0007669"/>
    <property type="project" value="UniProtKB-UniRule"/>
</dbReference>
<dbReference type="FunFam" id="3.40.50.1260:FF:000001">
    <property type="entry name" value="Phosphoglycerate kinase"/>
    <property type="match status" value="1"/>
</dbReference>
<dbReference type="FunFam" id="3.40.50.1260:FF:000008">
    <property type="entry name" value="Phosphoglycerate kinase"/>
    <property type="match status" value="1"/>
</dbReference>
<dbReference type="Gene3D" id="3.40.50.1260">
    <property type="entry name" value="Phosphoglycerate kinase, N-terminal domain"/>
    <property type="match status" value="2"/>
</dbReference>
<dbReference type="HAMAP" id="MF_00145">
    <property type="entry name" value="Phosphoglyc_kinase"/>
    <property type="match status" value="1"/>
</dbReference>
<dbReference type="InterPro" id="IPR001576">
    <property type="entry name" value="Phosphoglycerate_kinase"/>
</dbReference>
<dbReference type="InterPro" id="IPR015911">
    <property type="entry name" value="Phosphoglycerate_kinase_CS"/>
</dbReference>
<dbReference type="InterPro" id="IPR015824">
    <property type="entry name" value="Phosphoglycerate_kinase_N"/>
</dbReference>
<dbReference type="InterPro" id="IPR036043">
    <property type="entry name" value="Phosphoglycerate_kinase_sf"/>
</dbReference>
<dbReference type="PANTHER" id="PTHR11406">
    <property type="entry name" value="PHOSPHOGLYCERATE KINASE"/>
    <property type="match status" value="1"/>
</dbReference>
<dbReference type="PANTHER" id="PTHR11406:SF23">
    <property type="entry name" value="PHOSPHOGLYCERATE KINASE 1, CHLOROPLASTIC-RELATED"/>
    <property type="match status" value="1"/>
</dbReference>
<dbReference type="Pfam" id="PF00162">
    <property type="entry name" value="PGK"/>
    <property type="match status" value="1"/>
</dbReference>
<dbReference type="PIRSF" id="PIRSF000724">
    <property type="entry name" value="Pgk"/>
    <property type="match status" value="1"/>
</dbReference>
<dbReference type="PRINTS" id="PR00477">
    <property type="entry name" value="PHGLYCKINASE"/>
</dbReference>
<dbReference type="SUPFAM" id="SSF53748">
    <property type="entry name" value="Phosphoglycerate kinase"/>
    <property type="match status" value="1"/>
</dbReference>
<dbReference type="PROSITE" id="PS00111">
    <property type="entry name" value="PGLYCERATE_KINASE"/>
    <property type="match status" value="1"/>
</dbReference>
<protein>
    <recommendedName>
        <fullName evidence="1">Phosphoglycerate kinase</fullName>
        <ecNumber evidence="1">2.7.2.3</ecNumber>
    </recommendedName>
</protein>
<feature type="chain" id="PRO_1000192856" description="Phosphoglycerate kinase">
    <location>
        <begin position="1"/>
        <end position="398"/>
    </location>
</feature>
<feature type="binding site" evidence="1">
    <location>
        <begin position="21"/>
        <end position="23"/>
    </location>
    <ligand>
        <name>substrate</name>
    </ligand>
</feature>
<feature type="binding site" evidence="1">
    <location>
        <position position="36"/>
    </location>
    <ligand>
        <name>substrate</name>
    </ligand>
</feature>
<feature type="binding site" evidence="1">
    <location>
        <begin position="59"/>
        <end position="62"/>
    </location>
    <ligand>
        <name>substrate</name>
    </ligand>
</feature>
<feature type="binding site" evidence="1">
    <location>
        <position position="119"/>
    </location>
    <ligand>
        <name>substrate</name>
    </ligand>
</feature>
<feature type="binding site" evidence="1">
    <location>
        <position position="157"/>
    </location>
    <ligand>
        <name>substrate</name>
    </ligand>
</feature>
<feature type="binding site" evidence="1">
    <location>
        <position position="208"/>
    </location>
    <ligand>
        <name>ATP</name>
        <dbReference type="ChEBI" id="CHEBI:30616"/>
    </ligand>
</feature>
<feature type="binding site" evidence="1">
    <location>
        <position position="296"/>
    </location>
    <ligand>
        <name>ATP</name>
        <dbReference type="ChEBI" id="CHEBI:30616"/>
    </ligand>
</feature>
<feature type="binding site" evidence="1">
    <location>
        <position position="327"/>
    </location>
    <ligand>
        <name>ATP</name>
        <dbReference type="ChEBI" id="CHEBI:30616"/>
    </ligand>
</feature>
<feature type="binding site" evidence="1">
    <location>
        <begin position="354"/>
        <end position="357"/>
    </location>
    <ligand>
        <name>ATP</name>
        <dbReference type="ChEBI" id="CHEBI:30616"/>
    </ligand>
</feature>
<evidence type="ECO:0000255" key="1">
    <source>
        <dbReference type="HAMAP-Rule" id="MF_00145"/>
    </source>
</evidence>
<reference key="1">
    <citation type="journal article" date="2009" name="BMC Genomics">
        <title>Evidence for niche adaptation in the genome of the bovine pathogen Streptococcus uberis.</title>
        <authorList>
            <person name="Ward P.N."/>
            <person name="Holden M.T.G."/>
            <person name="Leigh J.A."/>
            <person name="Lennard N."/>
            <person name="Bignell A."/>
            <person name="Barron A."/>
            <person name="Clark L."/>
            <person name="Quail M.A."/>
            <person name="Woodward J."/>
            <person name="Barrell B.G."/>
            <person name="Egan S.A."/>
            <person name="Field T.R."/>
            <person name="Maskell D."/>
            <person name="Kehoe M."/>
            <person name="Dowson C.G."/>
            <person name="Chanter N."/>
            <person name="Whatmore A.M."/>
            <person name="Bentley S.D."/>
            <person name="Parkhill J."/>
        </authorList>
    </citation>
    <scope>NUCLEOTIDE SEQUENCE [LARGE SCALE GENOMIC DNA]</scope>
    <source>
        <strain>ATCC BAA-854 / 0140J</strain>
    </source>
</reference>
<gene>
    <name evidence="1" type="primary">pgk</name>
    <name type="ordered locus">SUB1629</name>
</gene>
<keyword id="KW-0067">ATP-binding</keyword>
<keyword id="KW-0963">Cytoplasm</keyword>
<keyword id="KW-0324">Glycolysis</keyword>
<keyword id="KW-0418">Kinase</keyword>
<keyword id="KW-0547">Nucleotide-binding</keyword>
<keyword id="KW-1185">Reference proteome</keyword>
<keyword id="KW-0808">Transferase</keyword>
<proteinExistence type="inferred from homology"/>
<name>PGK_STRU0</name>
<sequence length="398" mass="42334">MAKMTVKDLDLKGKKVLVRVDFNVPLKDGVITNDNRISAALPTIKYIIENGGRAILFSHLGRVKEEADKEGKSLAPVAKDLSAKLGTEVVFPGVTRGAELEEAINALEDGQVLLVENTRFEDVDGKKESKNDPELGKYWASLGDGIFVNDAFGTAHRAHASNVGISANVDKAVAGFLLENEIAYIKEAVEKPERPFVAILGGSKVSDKIGVIENLLEKADKVLIGGGMTYTFYKAQGIEIGNSLVEEDKLDIAKELLEKSNGKLILPVDSKEANAFADYTEVRDTEGEAVSEGFLGLDIGPKSIAKFEEALEGAKTVVWNGPMGVFENPDFQAGTIGVMDAIVKQPGVKSIIGGGDSAAAAINLGRADKFSWISTGGGASMELLEGKELPGLSALTEK</sequence>